<protein>
    <recommendedName>
        <fullName evidence="12">Lysine-specific histone demethylase 2</fullName>
        <ecNumber evidence="5 7 9">1.14.99.66</ecNumber>
    </recommendedName>
    <alternativeName>
        <fullName>Flavin-containing amine oxidase domain-containing protein 1</fullName>
    </alternativeName>
    <alternativeName>
        <fullName evidence="12">Lysine-specific histone demethylase 1B</fullName>
    </alternativeName>
</protein>
<keyword id="KW-0002">3D-structure</keyword>
<keyword id="KW-0025">Alternative splicing</keyword>
<keyword id="KW-0156">Chromatin regulator</keyword>
<keyword id="KW-0158">Chromosome</keyword>
<keyword id="KW-0217">Developmental protein</keyword>
<keyword id="KW-0274">FAD</keyword>
<keyword id="KW-0285">Flavoprotein</keyword>
<keyword id="KW-0479">Metal-binding</keyword>
<keyword id="KW-0539">Nucleus</keyword>
<keyword id="KW-0560">Oxidoreductase</keyword>
<keyword id="KW-0597">Phosphoprotein</keyword>
<keyword id="KW-1267">Proteomics identification</keyword>
<keyword id="KW-1185">Reference proteome</keyword>
<keyword id="KW-0678">Repressor</keyword>
<keyword id="KW-0804">Transcription</keyword>
<keyword id="KW-0805">Transcription regulation</keyword>
<keyword id="KW-0862">Zinc</keyword>
<keyword id="KW-0863">Zinc-finger</keyword>
<comment type="function">
    <text evidence="5 7 9">Histone demethylase that demethylates 'Lys-4' of histone H3, a specific tag for epigenetic transcriptional activation, thereby acting as a corepressor. Required for de novo DNA methylation of a subset of imprinted genes during oogenesis. Acts by oxidizing the substrate by FAD to generate the corresponding imine that is subsequently hydrolyzed. Demethylates both mono- and di-methylated 'Lys-4' of histone H3. Has no effect on tri-methylated 'Lys-4', mono-, di- or tri-methylated 'Lys-9', mono-, di- or tri-methylated 'Lys-27', mono-, di- or tri-methylated 'Lys-36' of histone H3, or on mono-, di- or tri-methylated 'Lys-20' of histone H4. Alone, it is unable to demethylate H3K4me on nucleosomes and requires the presence of GLYR1 to achieve such activity, they form a multifunctional enzyme complex that modifies transcribed chromatin and facilitates Pol II transcription through nucleosomes (PubMed:30970244).</text>
</comment>
<comment type="catalytic activity">
    <reaction evidence="5 7 9">
        <text>N(6),N(6)-dimethyl-L-lysyl(4)-[histone H3] + 2 A + 2 H2O = L-lysyl(4)-[histone H3] + 2 formaldehyde + 2 AH2</text>
        <dbReference type="Rhea" id="RHEA:60244"/>
        <dbReference type="Rhea" id="RHEA-COMP:15540"/>
        <dbReference type="Rhea" id="RHEA-COMP:15547"/>
        <dbReference type="ChEBI" id="CHEBI:13193"/>
        <dbReference type="ChEBI" id="CHEBI:15377"/>
        <dbReference type="ChEBI" id="CHEBI:16842"/>
        <dbReference type="ChEBI" id="CHEBI:17499"/>
        <dbReference type="ChEBI" id="CHEBI:29969"/>
        <dbReference type="ChEBI" id="CHEBI:61976"/>
        <dbReference type="EC" id="1.14.99.66"/>
    </reaction>
    <physiologicalReaction direction="left-to-right" evidence="13">
        <dbReference type="Rhea" id="RHEA:60245"/>
    </physiologicalReaction>
</comment>
<comment type="catalytic activity">
    <reaction evidence="9">
        <text>N(6)-methyl-L-lysyl(4)-[histone H3] + A + H2O = L-lysyl(4)-[histone H3] + formaldehyde + AH2</text>
        <dbReference type="Rhea" id="RHEA:60256"/>
        <dbReference type="Rhea" id="RHEA-COMP:15543"/>
        <dbReference type="Rhea" id="RHEA-COMP:15547"/>
        <dbReference type="ChEBI" id="CHEBI:13193"/>
        <dbReference type="ChEBI" id="CHEBI:15377"/>
        <dbReference type="ChEBI" id="CHEBI:16842"/>
        <dbReference type="ChEBI" id="CHEBI:17499"/>
        <dbReference type="ChEBI" id="CHEBI:29969"/>
        <dbReference type="ChEBI" id="CHEBI:61929"/>
    </reaction>
    <physiologicalReaction direction="left-to-right" evidence="13">
        <dbReference type="Rhea" id="RHEA:60257"/>
    </physiologicalReaction>
</comment>
<comment type="cofactor">
    <cofactor evidence="5 6 7 9">
        <name>FAD</name>
        <dbReference type="ChEBI" id="CHEBI:57692"/>
    </cofactor>
</comment>
<comment type="cofactor">
    <cofactor evidence="5 6 7 9">
        <name>Zn(2+)</name>
        <dbReference type="ChEBI" id="CHEBI:29105"/>
    </cofactor>
    <text evidence="5 6 7 9">Binds 3 Zn(2+) ions per subunit.</text>
</comment>
<comment type="activity regulation">
    <text evidence="5 9">Histone H3K4me1 and H3K4me2 demethylase activity is inhibited by DNA, this inhibition is released in complex with GLYR1.</text>
</comment>
<comment type="biophysicochemical properties">
    <kinetics>
        <KM evidence="9">1.34 uM for N(6)-methyl-L-lysyl-[histone H3]</KM>
        <KM evidence="9">0.99 uM for N(6),N(6)-dimethyl-L-lysyl(4)-[histone H3]</KM>
        <text evidence="9">Kcat is 0.56 min(-1) for N(6)-methyl-L-lysyl(4)-[histone H3] and 1.30 min(-1) for N(6),N(6)-dimethyl-L-lysyl(4)-[histone H3] as substrates.</text>
    </kinetics>
</comment>
<comment type="subunit">
    <text evidence="5 8 9 13">Interacts with its cofactor GLYR1 at nucleosomes; this interaction stimulates H3K4me1 and H3K4me2 demethylation (PubMed:23260659, PubMed:30970244). In contrast to KDM1A, does not form a complex with RCOR1/CoREST (Probable). Possible accessory component of the polycomb repressive deubiquitinase (PR-DUB) complex, at least composed of BAP1, one of ASXL1, ASXL2 or (probably) ASXL3 and one of MBD5 or MBD6 (PubMed:30664650). The PR-DUB core associates with a number of accessory proteins, including FOXK1, FOXK2, KDM1B, HCFC1 and OGT; KDM1B specifically associates with ASXL2 PR-DUB complexes (PubMed:30664650).</text>
</comment>
<comment type="interaction">
    <interactant intactId="EBI-2509999">
        <id>Q8NB78</id>
    </interactant>
    <interactant intactId="EBI-13322423">
        <id>Q96L03</id>
        <label>SPATA17</label>
    </interactant>
    <organismsDiffer>false</organismsDiffer>
    <experiments>2</experiments>
</comment>
<comment type="subcellular location">
    <subcellularLocation>
        <location evidence="8">Nucleus</location>
    </subcellularLocation>
    <subcellularLocation>
        <location evidence="8">Chromosome</location>
    </subcellularLocation>
    <text evidence="13">Found in actively RNAPolII-transcribed gene bodies.</text>
</comment>
<comment type="alternative products">
    <event type="alternative splicing"/>
    <isoform>
        <id>Q8NB78-1</id>
        <name>1</name>
        <sequence type="displayed"/>
    </isoform>
    <isoform>
        <id>Q8NB78-2</id>
        <name>2</name>
        <sequence type="described" ref="VSP_019964 VSP_019965"/>
    </isoform>
    <isoform>
        <id>Q8NB78-4</id>
        <name>4</name>
        <sequence type="described" ref="VSP_019963"/>
    </isoform>
</comment>
<comment type="similarity">
    <text evidence="12">Belongs to the flavin monoamine oxidase family.</text>
</comment>
<comment type="sequence caution" evidence="12">
    <conflict type="erroneous initiation">
        <sequence resource="EMBL-CDS" id="BAC03663"/>
    </conflict>
    <text>Truncated N-terminus.</text>
</comment>
<sequence>MATPRGRTKKKASFDHSPDSLPLRSSGRQAKKKATETTDEDEDGGSEKKYRKCEKAGCTATCPVCFASASERCAKNGYTSRWYHLSCGEHFCNECFDHYYRSHKDGYDKYTTWKKIWTSNGKTEPSPKAFMADQQLPYWVQCTKPECRKWRQLTKEIQLTPQIAKTYRCGMKPNTAIKPETSDHCSLPEDLRVLEVSNHWWYSMLILPPLLKDSVAAPLLSAYYPDCVGMSPSCTSTNRAAATGNASPGKLEHSKAALSVHVPGMNRYFQPFYQPNECGKALCVRPDVMELDELYEFPEYSRDPTMYLALRNLILALWYTNCKEALTPQKCIPHIIVRGLVRIRCVQEVERILYFMTRKGLINTGVLSVGADQYLLPKDYHNKSVIIIGAGPAGLAAARQLHNFGIKVTVLEAKDRIGGRVWDDKSFKGVTVGRGAQIVNGCINNPVALMCEQLGISMHKFGERCDLIQEGGRITDPTIDKRMDFHFNALLDVVSEWRKDKTQLQDVPLGEKIEEIYKAFIKESGIQFSELEGQVLQFHLSNLEYACGSNLHQVSARSWDHNEFFAQFAGDHTLLTPGYSVIIEKLAEGLDIQLKSPVQCIDYSGDEVQVTTTDGTGYSAQKVLVTVPLALLQKGAIQFNPPLSEKKMKAINSLGAGIIEKIALQFPYRFWDSKVQGADFFGHVPPSASKRGLFAVFYDMDPQKKHSVLMSVIAGEAVASVRTLDDKQVLQQCMATLRELFKEQEVPDPTKYFVTRWSTDPWIQMAYSFVKTGGSGEAYDIIAEDIQGTVFFAGEATNRHFPQTVTGAYLSGVREASKIAAF</sequence>
<proteinExistence type="evidence at protein level"/>
<evidence type="ECO:0000255" key="1"/>
<evidence type="ECO:0000255" key="2">
    <source>
        <dbReference type="PROSITE-ProRule" id="PRU00247"/>
    </source>
</evidence>
<evidence type="ECO:0000255" key="3">
    <source>
        <dbReference type="PROSITE-ProRule" id="PRU00454"/>
    </source>
</evidence>
<evidence type="ECO:0000256" key="4">
    <source>
        <dbReference type="SAM" id="MobiDB-lite"/>
    </source>
</evidence>
<evidence type="ECO:0000269" key="5">
    <source>
    </source>
</evidence>
<evidence type="ECO:0000269" key="6">
    <source>
    </source>
</evidence>
<evidence type="ECO:0000269" key="7">
    <source>
    </source>
</evidence>
<evidence type="ECO:0000269" key="8">
    <source>
    </source>
</evidence>
<evidence type="ECO:0000269" key="9">
    <source>
    </source>
</evidence>
<evidence type="ECO:0000303" key="10">
    <source>
    </source>
</evidence>
<evidence type="ECO:0000303" key="11">
    <source>
    </source>
</evidence>
<evidence type="ECO:0000305" key="12"/>
<evidence type="ECO:0000305" key="13">
    <source>
    </source>
</evidence>
<evidence type="ECO:0000312" key="14">
    <source>
        <dbReference type="HGNC" id="HGNC:21577"/>
    </source>
</evidence>
<evidence type="ECO:0007744" key="15">
    <source>
        <dbReference type="PDB" id="4FWE"/>
    </source>
</evidence>
<evidence type="ECO:0007744" key="16">
    <source>
        <dbReference type="PDB" id="4FWF"/>
    </source>
</evidence>
<evidence type="ECO:0007744" key="17">
    <source>
        <dbReference type="PDB" id="4FWJ"/>
    </source>
</evidence>
<evidence type="ECO:0007744" key="18">
    <source>
        <dbReference type="PDB" id="4GU0"/>
    </source>
</evidence>
<evidence type="ECO:0007744" key="19">
    <source>
        <dbReference type="PDB" id="4GU1"/>
    </source>
</evidence>
<evidence type="ECO:0007744" key="20">
    <source>
        <dbReference type="PDB" id="4GUR"/>
    </source>
</evidence>
<evidence type="ECO:0007744" key="21">
    <source>
        <dbReference type="PDB" id="4GUS"/>
    </source>
</evidence>
<evidence type="ECO:0007744" key="22">
    <source>
        <dbReference type="PDB" id="4GUT"/>
    </source>
</evidence>
<evidence type="ECO:0007744" key="23">
    <source>
        <dbReference type="PDB" id="4GUU"/>
    </source>
</evidence>
<evidence type="ECO:0007744" key="24">
    <source>
        <dbReference type="PDB" id="4HSU"/>
    </source>
</evidence>
<evidence type="ECO:0007744" key="25">
    <source>
        <dbReference type="PDB" id="6R1U"/>
    </source>
</evidence>
<evidence type="ECO:0007744" key="26">
    <source>
        <dbReference type="PDB" id="6R25"/>
    </source>
</evidence>
<evidence type="ECO:0007744" key="27">
    <source>
    </source>
</evidence>
<evidence type="ECO:0007744" key="28">
    <source>
    </source>
</evidence>
<evidence type="ECO:0007744" key="29">
    <source>
    </source>
</evidence>
<evidence type="ECO:0007744" key="30">
    <source>
    </source>
</evidence>
<evidence type="ECO:0007744" key="31">
    <source>
    </source>
</evidence>
<evidence type="ECO:0007829" key="32">
    <source>
        <dbReference type="PDB" id="4FWE"/>
    </source>
</evidence>
<evidence type="ECO:0007829" key="33">
    <source>
        <dbReference type="PDB" id="4FWF"/>
    </source>
</evidence>
<evidence type="ECO:0007829" key="34">
    <source>
        <dbReference type="PDB" id="4FWJ"/>
    </source>
</evidence>
<evidence type="ECO:0007829" key="35">
    <source>
        <dbReference type="PDB" id="4GU0"/>
    </source>
</evidence>
<evidence type="ECO:0007829" key="36">
    <source>
        <dbReference type="PDB" id="4GU1"/>
    </source>
</evidence>
<evidence type="ECO:0007829" key="37">
    <source>
        <dbReference type="PDB" id="4GUT"/>
    </source>
</evidence>
<evidence type="ECO:0007829" key="38">
    <source>
        <dbReference type="PDB" id="4HSU"/>
    </source>
</evidence>
<evidence type="ECO:0007829" key="39">
    <source>
        <dbReference type="PDB" id="7XE1"/>
    </source>
</evidence>
<evidence type="ECO:0007829" key="40">
    <source>
        <dbReference type="PDB" id="7XE2"/>
    </source>
</evidence>
<dbReference type="EC" id="1.14.99.66" evidence="5 7 9"/>
<dbReference type="EMBL" id="AK091217">
    <property type="protein sequence ID" value="BAC03612.1"/>
    <property type="molecule type" value="mRNA"/>
</dbReference>
<dbReference type="EMBL" id="AK091428">
    <property type="protein sequence ID" value="BAC03663.1"/>
    <property type="status" value="ALT_INIT"/>
    <property type="molecule type" value="mRNA"/>
</dbReference>
<dbReference type="EMBL" id="AK125318">
    <property type="protein sequence ID" value="BAC86124.1"/>
    <property type="molecule type" value="mRNA"/>
</dbReference>
<dbReference type="EMBL" id="AL031774">
    <property type="status" value="NOT_ANNOTATED_CDS"/>
    <property type="molecule type" value="Genomic_DNA"/>
</dbReference>
<dbReference type="EMBL" id="AL589723">
    <property type="status" value="NOT_ANNOTATED_CDS"/>
    <property type="molecule type" value="Genomic_DNA"/>
</dbReference>
<dbReference type="EMBL" id="CH471087">
    <property type="protein sequence ID" value="EAW55401.1"/>
    <property type="molecule type" value="Genomic_DNA"/>
</dbReference>
<dbReference type="EMBL" id="CR627410">
    <property type="protein sequence ID" value="CAH10499.1"/>
    <property type="molecule type" value="mRNA"/>
</dbReference>
<dbReference type="CCDS" id="CCDS34343.1">
    <molecule id="Q8NB78-2"/>
</dbReference>
<dbReference type="CCDS" id="CCDS93866.1">
    <molecule id="Q8NB78-1"/>
</dbReference>
<dbReference type="RefSeq" id="NP_001351543.1">
    <molecule id="Q8NB78-1"/>
    <property type="nucleotide sequence ID" value="NM_001364614.2"/>
</dbReference>
<dbReference type="RefSeq" id="NP_694587.3">
    <molecule id="Q8NB78-2"/>
    <property type="nucleotide sequence ID" value="NM_153042.3"/>
</dbReference>
<dbReference type="RefSeq" id="XP_005248983.1">
    <property type="nucleotide sequence ID" value="XM_005248926.1"/>
</dbReference>
<dbReference type="RefSeq" id="XP_047274312.1">
    <molecule id="Q8NB78-1"/>
    <property type="nucleotide sequence ID" value="XM_047418356.1"/>
</dbReference>
<dbReference type="RefSeq" id="XP_054210584.1">
    <molecule id="Q8NB78-1"/>
    <property type="nucleotide sequence ID" value="XM_054354609.1"/>
</dbReference>
<dbReference type="PDB" id="4FWE">
    <property type="method" value="X-ray"/>
    <property type="resolution" value="2.13 A"/>
    <property type="chains" value="A=30-822"/>
</dbReference>
<dbReference type="PDB" id="4FWF">
    <property type="method" value="X-ray"/>
    <property type="resolution" value="2.70 A"/>
    <property type="chains" value="A=30-822"/>
</dbReference>
<dbReference type="PDB" id="4FWJ">
    <property type="method" value="X-ray"/>
    <property type="resolution" value="2.90 A"/>
    <property type="chains" value="A/B=30-822"/>
</dbReference>
<dbReference type="PDB" id="4GU0">
    <property type="method" value="X-ray"/>
    <property type="resolution" value="3.10 A"/>
    <property type="chains" value="A/B/C/D=51-822"/>
</dbReference>
<dbReference type="PDB" id="4GU1">
    <property type="method" value="X-ray"/>
    <property type="resolution" value="2.94 A"/>
    <property type="chains" value="A/B=51-822"/>
</dbReference>
<dbReference type="PDB" id="4GUR">
    <property type="method" value="X-ray"/>
    <property type="resolution" value="2.51 A"/>
    <property type="chains" value="A=51-822"/>
</dbReference>
<dbReference type="PDB" id="4GUS">
    <property type="method" value="X-ray"/>
    <property type="resolution" value="2.23 A"/>
    <property type="chains" value="A=51-822"/>
</dbReference>
<dbReference type="PDB" id="4GUT">
    <property type="method" value="X-ray"/>
    <property type="resolution" value="2.00 A"/>
    <property type="chains" value="A=51-822"/>
</dbReference>
<dbReference type="PDB" id="4GUU">
    <property type="method" value="X-ray"/>
    <property type="resolution" value="2.30 A"/>
    <property type="chains" value="A=51-822"/>
</dbReference>
<dbReference type="PDB" id="4HSU">
    <property type="method" value="X-ray"/>
    <property type="resolution" value="1.99 A"/>
    <property type="chains" value="A=51-822"/>
</dbReference>
<dbReference type="PDB" id="6R1U">
    <property type="method" value="EM"/>
    <property type="resolution" value="4.36 A"/>
    <property type="chains" value="K=51-822"/>
</dbReference>
<dbReference type="PDB" id="6R25">
    <property type="method" value="EM"/>
    <property type="resolution" value="4.61 A"/>
    <property type="chains" value="K=51-822"/>
</dbReference>
<dbReference type="PDB" id="7XE1">
    <property type="method" value="X-ray"/>
    <property type="resolution" value="2.07 A"/>
    <property type="chains" value="A/B=30-822"/>
</dbReference>
<dbReference type="PDB" id="7XE2">
    <property type="method" value="X-ray"/>
    <property type="resolution" value="2.05 A"/>
    <property type="chains" value="A/B=30-822"/>
</dbReference>
<dbReference type="PDB" id="7XE3">
    <property type="method" value="X-ray"/>
    <property type="resolution" value="2.82 A"/>
    <property type="chains" value="A/B=30-822"/>
</dbReference>
<dbReference type="PDBsum" id="4FWE"/>
<dbReference type="PDBsum" id="4FWF"/>
<dbReference type="PDBsum" id="4FWJ"/>
<dbReference type="PDBsum" id="4GU0"/>
<dbReference type="PDBsum" id="4GU1"/>
<dbReference type="PDBsum" id="4GUR"/>
<dbReference type="PDBsum" id="4GUS"/>
<dbReference type="PDBsum" id="4GUT"/>
<dbReference type="PDBsum" id="4GUU"/>
<dbReference type="PDBsum" id="4HSU"/>
<dbReference type="PDBsum" id="6R1U"/>
<dbReference type="PDBsum" id="6R25"/>
<dbReference type="PDBsum" id="7XE1"/>
<dbReference type="PDBsum" id="7XE2"/>
<dbReference type="PDBsum" id="7XE3"/>
<dbReference type="EMDB" id="EMD-4705"/>
<dbReference type="EMDB" id="EMD-4710"/>
<dbReference type="SASBDB" id="Q8NB78"/>
<dbReference type="SMR" id="Q8NB78"/>
<dbReference type="BioGRID" id="128743">
    <property type="interactions" value="60"/>
</dbReference>
<dbReference type="FunCoup" id="Q8NB78">
    <property type="interactions" value="1951"/>
</dbReference>
<dbReference type="IntAct" id="Q8NB78">
    <property type="interactions" value="33"/>
</dbReference>
<dbReference type="MINT" id="Q8NB78"/>
<dbReference type="BindingDB" id="Q8NB78"/>
<dbReference type="ChEMBL" id="CHEMBL1938208"/>
<dbReference type="DrugCentral" id="Q8NB78"/>
<dbReference type="GlyGen" id="Q8NB78">
    <property type="glycosylation" value="2 sites, 1 N-linked glycan (1 site), 1 O-linked glycan (1 site)"/>
</dbReference>
<dbReference type="iPTMnet" id="Q8NB78"/>
<dbReference type="PhosphoSitePlus" id="Q8NB78"/>
<dbReference type="SwissPalm" id="Q8NB78"/>
<dbReference type="BioMuta" id="KDM1B"/>
<dbReference type="DMDM" id="317373434"/>
<dbReference type="jPOST" id="Q8NB78"/>
<dbReference type="MassIVE" id="Q8NB78"/>
<dbReference type="PeptideAtlas" id="Q8NB78"/>
<dbReference type="ProteomicsDB" id="72745">
    <molecule id="Q8NB78-1"/>
</dbReference>
<dbReference type="ProteomicsDB" id="72746">
    <molecule id="Q8NB78-2"/>
</dbReference>
<dbReference type="ProteomicsDB" id="72747">
    <molecule id="Q8NB78-4"/>
</dbReference>
<dbReference type="Pumba" id="Q8NB78"/>
<dbReference type="Antibodypedia" id="25190">
    <property type="antibodies" value="154 antibodies from 26 providers"/>
</dbReference>
<dbReference type="DNASU" id="221656"/>
<dbReference type="Ensembl" id="ENST00000297792.9">
    <molecule id="Q8NB78-2"/>
    <property type="protein sequence ID" value="ENSP00000297792.5"/>
    <property type="gene ID" value="ENSG00000165097.16"/>
</dbReference>
<dbReference type="Ensembl" id="ENST00000650836.2">
    <molecule id="Q8NB78-1"/>
    <property type="protein sequence ID" value="ENSP00000499208.1"/>
    <property type="gene ID" value="ENSG00000165097.16"/>
</dbReference>
<dbReference type="GeneID" id="221656"/>
<dbReference type="KEGG" id="hsa:221656"/>
<dbReference type="MANE-Select" id="ENST00000650836.2">
    <property type="protein sequence ID" value="ENSP00000499208.1"/>
    <property type="RefSeq nucleotide sequence ID" value="NM_001364614.2"/>
    <property type="RefSeq protein sequence ID" value="NP_001351543.1"/>
</dbReference>
<dbReference type="UCSC" id="uc003ncn.2">
    <molecule id="Q8NB78-1"/>
    <property type="organism name" value="human"/>
</dbReference>
<dbReference type="AGR" id="HGNC:21577"/>
<dbReference type="CTD" id="221656"/>
<dbReference type="DisGeNET" id="221656"/>
<dbReference type="GeneCards" id="KDM1B"/>
<dbReference type="HGNC" id="HGNC:21577">
    <property type="gene designation" value="KDM1B"/>
</dbReference>
<dbReference type="HPA" id="ENSG00000165097">
    <property type="expression patterns" value="Low tissue specificity"/>
</dbReference>
<dbReference type="MIM" id="613081">
    <property type="type" value="gene"/>
</dbReference>
<dbReference type="neXtProt" id="NX_Q8NB78"/>
<dbReference type="OpenTargets" id="ENSG00000165097"/>
<dbReference type="PharmGKB" id="PA162379723"/>
<dbReference type="PharmGKB" id="PA165617946"/>
<dbReference type="VEuPathDB" id="HostDB:ENSG00000165097"/>
<dbReference type="eggNOG" id="KOG0029">
    <property type="taxonomic scope" value="Eukaryota"/>
</dbReference>
<dbReference type="GeneTree" id="ENSGT00940000157751"/>
<dbReference type="InParanoid" id="Q8NB78"/>
<dbReference type="OrthoDB" id="2219495at2759"/>
<dbReference type="PAN-GO" id="Q8NB78">
    <property type="GO annotations" value="6 GO annotations based on evolutionary models"/>
</dbReference>
<dbReference type="PhylomeDB" id="Q8NB78"/>
<dbReference type="TreeFam" id="TF352593"/>
<dbReference type="BioCyc" id="MetaCyc:ENSG00000165097-MONOMER"/>
<dbReference type="PathwayCommons" id="Q8NB78"/>
<dbReference type="Reactome" id="R-HSA-3214842">
    <property type="pathway name" value="HDMs demethylate histones"/>
</dbReference>
<dbReference type="Reactome" id="R-HSA-5689603">
    <property type="pathway name" value="UCH proteinases"/>
</dbReference>
<dbReference type="Reactome" id="R-HSA-9029569">
    <property type="pathway name" value="NR1H3 &amp; NR1H2 regulate gene expression linked to cholesterol transport and efflux"/>
</dbReference>
<dbReference type="SignaLink" id="Q8NB78"/>
<dbReference type="BioGRID-ORCS" id="221656">
    <property type="hits" value="22 hits in 1176 CRISPR screens"/>
</dbReference>
<dbReference type="ChiTaRS" id="KDM1B">
    <property type="organism name" value="human"/>
</dbReference>
<dbReference type="EvolutionaryTrace" id="Q8NB78"/>
<dbReference type="GenomeRNAi" id="221656"/>
<dbReference type="Pharos" id="Q8NB78">
    <property type="development level" value="Tbio"/>
</dbReference>
<dbReference type="PRO" id="PR:Q8NB78"/>
<dbReference type="Proteomes" id="UP000005640">
    <property type="component" value="Chromosome 6"/>
</dbReference>
<dbReference type="RNAct" id="Q8NB78">
    <property type="molecule type" value="protein"/>
</dbReference>
<dbReference type="Bgee" id="ENSG00000165097">
    <property type="expression patterns" value="Expressed in secondary oocyte and 174 other cell types or tissues"/>
</dbReference>
<dbReference type="ExpressionAtlas" id="Q8NB78">
    <property type="expression patterns" value="baseline and differential"/>
</dbReference>
<dbReference type="GO" id="GO:0000785">
    <property type="term" value="C:chromatin"/>
    <property type="evidence" value="ECO:0000314"/>
    <property type="project" value="UniProt"/>
</dbReference>
<dbReference type="GO" id="GO:0005654">
    <property type="term" value="C:nucleoplasm"/>
    <property type="evidence" value="ECO:0000314"/>
    <property type="project" value="HPA"/>
</dbReference>
<dbReference type="GO" id="GO:0000786">
    <property type="term" value="C:nucleosome"/>
    <property type="evidence" value="ECO:0000314"/>
    <property type="project" value="UniProtKB"/>
</dbReference>
<dbReference type="GO" id="GO:0005634">
    <property type="term" value="C:nucleus"/>
    <property type="evidence" value="ECO:0000250"/>
    <property type="project" value="UniProtKB"/>
</dbReference>
<dbReference type="GO" id="GO:0071949">
    <property type="term" value="F:FAD binding"/>
    <property type="evidence" value="ECO:0000314"/>
    <property type="project" value="UniProtKB"/>
</dbReference>
<dbReference type="GO" id="GO:0140682">
    <property type="term" value="F:FAD-dependent H3K4me/H3K4me3 demethylase activity"/>
    <property type="evidence" value="ECO:0000314"/>
    <property type="project" value="UniProt"/>
</dbReference>
<dbReference type="GO" id="GO:0042393">
    <property type="term" value="F:histone binding"/>
    <property type="evidence" value="ECO:0000314"/>
    <property type="project" value="UniProtKB"/>
</dbReference>
<dbReference type="GO" id="GO:0032452">
    <property type="term" value="F:histone demethylase activity"/>
    <property type="evidence" value="ECO:0000304"/>
    <property type="project" value="Reactome"/>
</dbReference>
<dbReference type="GO" id="GO:0016491">
    <property type="term" value="F:oxidoreductase activity"/>
    <property type="evidence" value="ECO:0000318"/>
    <property type="project" value="GO_Central"/>
</dbReference>
<dbReference type="GO" id="GO:0008270">
    <property type="term" value="F:zinc ion binding"/>
    <property type="evidence" value="ECO:0000314"/>
    <property type="project" value="UniProtKB"/>
</dbReference>
<dbReference type="GO" id="GO:0044726">
    <property type="term" value="P:epigenetic programing of female pronucleus"/>
    <property type="evidence" value="ECO:0007669"/>
    <property type="project" value="Ensembl"/>
</dbReference>
<dbReference type="GO" id="GO:0071514">
    <property type="term" value="P:genomic imprinting"/>
    <property type="evidence" value="ECO:0000250"/>
    <property type="project" value="UniProtKB"/>
</dbReference>
<dbReference type="GO" id="GO:0045815">
    <property type="term" value="P:transcription initiation-coupled chromatin remodeling"/>
    <property type="evidence" value="ECO:0000314"/>
    <property type="project" value="UniProt"/>
</dbReference>
<dbReference type="FunFam" id="3.30.40.100:FF:000002">
    <property type="entry name" value="Lysine-specific histone demethylase 1B"/>
    <property type="match status" value="1"/>
</dbReference>
<dbReference type="FunFam" id="1.10.10.10:FF:000232">
    <property type="entry name" value="lysine-specific histone demethylase 1B"/>
    <property type="match status" value="1"/>
</dbReference>
<dbReference type="Gene3D" id="3.30.40.100">
    <property type="match status" value="1"/>
</dbReference>
<dbReference type="Gene3D" id="3.90.660.10">
    <property type="match status" value="1"/>
</dbReference>
<dbReference type="Gene3D" id="3.50.50.60">
    <property type="entry name" value="FAD/NAD(P)-binding domain"/>
    <property type="match status" value="1"/>
</dbReference>
<dbReference type="Gene3D" id="1.10.10.10">
    <property type="entry name" value="Winged helix-like DNA-binding domain superfamily/Winged helix DNA-binding domain"/>
    <property type="match status" value="1"/>
</dbReference>
<dbReference type="IDEAL" id="IID00487"/>
<dbReference type="InterPro" id="IPR002937">
    <property type="entry name" value="Amino_oxidase"/>
</dbReference>
<dbReference type="InterPro" id="IPR036188">
    <property type="entry name" value="FAD/NAD-bd_sf"/>
</dbReference>
<dbReference type="InterPro" id="IPR050281">
    <property type="entry name" value="Flavin_monoamine_oxidase"/>
</dbReference>
<dbReference type="InterPro" id="IPR009057">
    <property type="entry name" value="Homeodomain-like_sf"/>
</dbReference>
<dbReference type="InterPro" id="IPR007526">
    <property type="entry name" value="SWIRM"/>
</dbReference>
<dbReference type="InterPro" id="IPR036388">
    <property type="entry name" value="WH-like_DNA-bd_sf"/>
</dbReference>
<dbReference type="InterPro" id="IPR011124">
    <property type="entry name" value="Znf_CW"/>
</dbReference>
<dbReference type="PANTHER" id="PTHR10742">
    <property type="entry name" value="FLAVIN MONOAMINE OXIDASE"/>
    <property type="match status" value="1"/>
</dbReference>
<dbReference type="PANTHER" id="PTHR10742:SF410">
    <property type="entry name" value="LYSINE-SPECIFIC HISTONE DEMETHYLASE 2"/>
    <property type="match status" value="1"/>
</dbReference>
<dbReference type="Pfam" id="PF01593">
    <property type="entry name" value="Amino_oxidase"/>
    <property type="match status" value="1"/>
</dbReference>
<dbReference type="Pfam" id="PF04433">
    <property type="entry name" value="SWIRM"/>
    <property type="match status" value="1"/>
</dbReference>
<dbReference type="Pfam" id="PF07496">
    <property type="entry name" value="zf-CW"/>
    <property type="match status" value="1"/>
</dbReference>
<dbReference type="PRINTS" id="PR00419">
    <property type="entry name" value="ADXRDTASE"/>
</dbReference>
<dbReference type="SUPFAM" id="SSF54373">
    <property type="entry name" value="FAD-linked reductases, C-terminal domain"/>
    <property type="match status" value="1"/>
</dbReference>
<dbReference type="SUPFAM" id="SSF51905">
    <property type="entry name" value="FAD/NAD(P)-binding domain"/>
    <property type="match status" value="1"/>
</dbReference>
<dbReference type="SUPFAM" id="SSF46689">
    <property type="entry name" value="Homeodomain-like"/>
    <property type="match status" value="1"/>
</dbReference>
<dbReference type="PROSITE" id="PS50934">
    <property type="entry name" value="SWIRM"/>
    <property type="match status" value="1"/>
</dbReference>
<dbReference type="PROSITE" id="PS51050">
    <property type="entry name" value="ZF_CW"/>
    <property type="match status" value="1"/>
</dbReference>
<accession>Q8NB78</accession>
<accession>A2A2C5</accession>
<accession>A2A2C6</accession>
<accession>Q5TGV3</accession>
<accession>Q6AI15</accession>
<accession>Q6ZUU4</accession>
<accession>Q8N258</accession>
<accession>Q96EL7</accession>
<name>KDM1B_HUMAN</name>
<gene>
    <name evidence="14" type="primary">KDM1B</name>
    <name type="synonym">AOF1</name>
    <name type="synonym">C6orf193</name>
    <name evidence="11" type="synonym">LSD2</name>
</gene>
<organism>
    <name type="scientific">Homo sapiens</name>
    <name type="common">Human</name>
    <dbReference type="NCBI Taxonomy" id="9606"/>
    <lineage>
        <taxon>Eukaryota</taxon>
        <taxon>Metazoa</taxon>
        <taxon>Chordata</taxon>
        <taxon>Craniata</taxon>
        <taxon>Vertebrata</taxon>
        <taxon>Euteleostomi</taxon>
        <taxon>Mammalia</taxon>
        <taxon>Eutheria</taxon>
        <taxon>Euarchontoglires</taxon>
        <taxon>Primates</taxon>
        <taxon>Haplorrhini</taxon>
        <taxon>Catarrhini</taxon>
        <taxon>Hominidae</taxon>
        <taxon>Homo</taxon>
    </lineage>
</organism>
<feature type="chain" id="PRO_0000247336" description="Lysine-specific histone demethylase 2">
    <location>
        <begin position="1"/>
        <end position="822"/>
    </location>
</feature>
<feature type="domain" description="SWIRM" evidence="2">
    <location>
        <begin position="275"/>
        <end position="373"/>
    </location>
</feature>
<feature type="zinc finger region" description="CW-type" evidence="3">
    <location>
        <begin position="133"/>
        <end position="193"/>
    </location>
</feature>
<feature type="region of interest" description="Disordered" evidence="4">
    <location>
        <begin position="1"/>
        <end position="47"/>
    </location>
</feature>
<feature type="region of interest" description="GLYR1-binding" evidence="5 20 21 22 23">
    <location>
        <begin position="273"/>
        <end position="292"/>
    </location>
</feature>
<feature type="region of interest" description="Histone H3-binding" evidence="5 6 16 20 21">
    <location>
        <begin position="438"/>
        <end position="467"/>
    </location>
</feature>
<feature type="region of interest" description="Histone H3-binding" evidence="5 6 16 20 21">
    <location>
        <begin position="487"/>
        <end position="498"/>
    </location>
</feature>
<feature type="region of interest" description="Histone H3-binding" evidence="5 6 16 20 21">
    <location>
        <begin position="538"/>
        <end position="572"/>
    </location>
</feature>
<feature type="region of interest" description="GLYR1-binding" evidence="5 20 21 22 23">
    <location>
        <begin position="564"/>
        <end position="566"/>
    </location>
</feature>
<feature type="region of interest" description="GLYR1-binding" evidence="5 20 21 22 23">
    <location>
        <begin position="798"/>
        <end position="814"/>
    </location>
</feature>
<feature type="compositionally biased region" description="Basic residues" evidence="4">
    <location>
        <begin position="1"/>
        <end position="11"/>
    </location>
</feature>
<feature type="binding site" evidence="5 6 7 9 15 16 17 18 19 20 21 22 23 24 25 26">
    <location>
        <position position="53"/>
    </location>
    <ligand>
        <name>Zn(2+)</name>
        <dbReference type="ChEBI" id="CHEBI:29105"/>
        <label>1</label>
    </ligand>
</feature>
<feature type="binding site" evidence="5 6 7 9 15 16 17 18 19 20 21 22 23 24 25 26">
    <location>
        <position position="58"/>
    </location>
    <ligand>
        <name>Zn(2+)</name>
        <dbReference type="ChEBI" id="CHEBI:29105"/>
        <label>1</label>
    </ligand>
</feature>
<feature type="binding site" evidence="5 6 7 9 15 16 17 18 19 20 21 22 23 24 25 26">
    <location>
        <position position="65"/>
    </location>
    <ligand>
        <name>Zn(2+)</name>
        <dbReference type="ChEBI" id="CHEBI:29105"/>
        <label>2</label>
    </ligand>
</feature>
<feature type="binding site" evidence="5 6 7 9 15 16 17 18 19 20 21 22 23 24 25 26">
    <location>
        <position position="73"/>
    </location>
    <ligand>
        <name>Zn(2+)</name>
        <dbReference type="ChEBI" id="CHEBI:29105"/>
        <label>2</label>
    </ligand>
</feature>
<feature type="binding site" evidence="5 6 7 9 15 16 17 18 19 20 21 22 23 24 25 26">
    <location>
        <position position="84"/>
    </location>
    <ligand>
        <name>Zn(2+)</name>
        <dbReference type="ChEBI" id="CHEBI:29105"/>
        <label>1</label>
    </ligand>
</feature>
<feature type="binding site" evidence="5 6 7 9 15 16 17 18 19 20 21 22 23 24 25 26">
    <location>
        <position position="90"/>
    </location>
    <ligand>
        <name>Zn(2+)</name>
        <dbReference type="ChEBI" id="CHEBI:29105"/>
        <label>1</label>
    </ligand>
</feature>
<feature type="binding site" evidence="5 6 7 9 15 16 17 18 19 20 21 22 23 24 25 26">
    <location>
        <position position="92"/>
    </location>
    <ligand>
        <name>Zn(2+)</name>
        <dbReference type="ChEBI" id="CHEBI:29105"/>
        <label>2</label>
    </ligand>
</feature>
<feature type="binding site" evidence="5 6 7 9 15 16 17 18 19 20 21 22 23 24 25 26">
    <location>
        <position position="95"/>
    </location>
    <ligand>
        <name>Zn(2+)</name>
        <dbReference type="ChEBI" id="CHEBI:29105"/>
        <label>2</label>
    </ligand>
</feature>
<feature type="binding site" evidence="3 5 6 7 9 15 16 17 18 19 20 21 22 23 24 25 26">
    <location>
        <position position="142"/>
    </location>
    <ligand>
        <name>Zn(2+)</name>
        <dbReference type="ChEBI" id="CHEBI:29105"/>
        <label>3</label>
    </ligand>
</feature>
<feature type="binding site" evidence="3 5 6 7 9 15 16 17 18 19 20 21 22 23 24 25 26">
    <location>
        <position position="147"/>
    </location>
    <ligand>
        <name>Zn(2+)</name>
        <dbReference type="ChEBI" id="CHEBI:29105"/>
        <label>3</label>
    </ligand>
</feature>
<feature type="binding site" evidence="3 5 6 7 9 15 16 17 18 19 20 21 22 23 24 25 26">
    <location>
        <position position="169"/>
    </location>
    <ligand>
        <name>Zn(2+)</name>
        <dbReference type="ChEBI" id="CHEBI:29105"/>
        <label>3</label>
    </ligand>
</feature>
<feature type="binding site" evidence="3 5 6 7 9 15 16 17 18 19 20 21 22 23 24 25 26">
    <location>
        <position position="185"/>
    </location>
    <ligand>
        <name>Zn(2+)</name>
        <dbReference type="ChEBI" id="CHEBI:29105"/>
        <label>3</label>
    </ligand>
</feature>
<feature type="binding site" evidence="1 5 6 7 9 15 16 17 18 19 20 21 22 23 24 25 26">
    <location>
        <begin position="383"/>
        <end position="439"/>
    </location>
    <ligand>
        <name>FAD</name>
        <dbReference type="ChEBI" id="CHEBI:57692"/>
    </ligand>
</feature>
<feature type="binding site" evidence="5 6 7 9 15 16 17 18 19 20 21 22 23 24 25 26">
    <location>
        <position position="598"/>
    </location>
    <ligand>
        <name>FAD</name>
        <dbReference type="ChEBI" id="CHEBI:57692"/>
    </ligand>
</feature>
<feature type="binding site" evidence="5 6 9 15 16 17 19 21 22 23 25 26">
    <location>
        <position position="795"/>
    </location>
    <ligand>
        <name>FAD</name>
        <dbReference type="ChEBI" id="CHEBI:57692"/>
    </ligand>
</feature>
<feature type="binding site" evidence="5 6 7 9 15 16 17 18 19 20 21 22 23 24 25 26">
    <location>
        <begin position="803"/>
        <end position="805"/>
    </location>
    <ligand>
        <name>FAD</name>
        <dbReference type="ChEBI" id="CHEBI:57692"/>
    </ligand>
</feature>
<feature type="modified residue" description="Phosphoserine" evidence="30">
    <location>
        <position position="13"/>
    </location>
</feature>
<feature type="modified residue" description="Phosphoserine" evidence="27 28 29 30">
    <location>
        <position position="17"/>
    </location>
</feature>
<feature type="modified residue" description="Phosphoserine" evidence="30">
    <location>
        <position position="26"/>
    </location>
</feature>
<feature type="modified residue" description="Phosphoserine" evidence="29 30 31">
    <location>
        <position position="247"/>
    </location>
</feature>
<feature type="splice variant" id="VSP_019963" description="In isoform 4." evidence="10">
    <location>
        <begin position="1"/>
        <end position="647"/>
    </location>
</feature>
<feature type="splice variant" id="VSP_019964" description="In isoform 2." evidence="10">
    <location>
        <begin position="192"/>
        <end position="323"/>
    </location>
</feature>
<feature type="splice variant" id="VSP_019965" description="In isoform 2." evidence="10">
    <location>
        <begin position="453"/>
        <end position="552"/>
    </location>
</feature>
<feature type="mutagenesis site" description="Normal demethylase activity." evidence="6">
    <original>KK</original>
    <variation>AA</variation>
    <location>
        <begin position="48"/>
        <end position="49"/>
    </location>
</feature>
<feature type="mutagenesis site" description="Reduced demethylase activity." evidence="6">
    <original>RK</original>
    <variation>AA</variation>
    <location>
        <begin position="51"/>
        <end position="52"/>
    </location>
</feature>
<feature type="mutagenesis site" description="Loss of demethylase activity." evidence="6">
    <original>C</original>
    <variation>A</variation>
    <location>
        <position position="53"/>
    </location>
</feature>
<feature type="mutagenesis site" description="Loss of demethylase activity." evidence="6">
    <original>W</original>
    <variation>A</variation>
    <location>
        <position position="82"/>
    </location>
</feature>
<feature type="mutagenesis site" description="Loss of demethylase activity. Defective in the binding of FAD." evidence="6">
    <original>H</original>
    <variation>A</variation>
    <location>
        <position position="84"/>
    </location>
</feature>
<feature type="mutagenesis site" description="Loss of demethylase activity. Defective in the binding of FAD." evidence="6">
    <original>H</original>
    <variation>A</variation>
    <location>
        <position position="90"/>
    </location>
</feature>
<feature type="mutagenesis site" description="Reduced demethylase activity." evidence="6">
    <original>R</original>
    <variation>A</variation>
    <location>
        <position position="101"/>
    </location>
</feature>
<feature type="mutagenesis site" description="No effect on DNA or nucleosome binding." evidence="9">
    <original>H</original>
    <variation>D</variation>
    <location>
        <position position="103"/>
    </location>
</feature>
<feature type="mutagenesis site" description="No effect on DNA or nucleosome binding." evidence="9">
    <original>K</original>
    <variation>E</variation>
    <location>
        <position position="104"/>
    </location>
</feature>
<feature type="mutagenesis site" description="No effect on DNA or nucleosome binding." evidence="9">
    <original>K</original>
    <variation>E</variation>
    <location>
        <position position="109"/>
    </location>
</feature>
<feature type="mutagenesis site" description="Reduced demethylase activity." evidence="6">
    <original>KK</original>
    <variation>AA</variation>
    <location>
        <begin position="114"/>
        <end position="115"/>
    </location>
</feature>
<feature type="mutagenesis site" description="No effect on DNA or nucleosome binding." evidence="9">
    <original>K</original>
    <variation>E</variation>
    <location>
        <position position="114"/>
    </location>
</feature>
<feature type="mutagenesis site" description="No effect on DNA or nucleosome binding." evidence="9">
    <original>K</original>
    <variation>E</variation>
    <location>
        <position position="115"/>
    </location>
</feature>
<feature type="mutagenesis site" description="No effect on DNA or nucleosome binding." evidence="9">
    <original>K</original>
    <variation>E</variation>
    <location>
        <position position="122"/>
    </location>
</feature>
<feature type="mutagenesis site" description="Loss of demethylase activity." evidence="6">
    <original>W</original>
    <variation>A</variation>
    <location>
        <position position="139"/>
    </location>
</feature>
<feature type="mutagenesis site" description="Loss of demethylase activity. Defective in the binding of FAD." evidence="6">
    <original>W</original>
    <variation>A</variation>
    <location>
        <position position="150"/>
    </location>
</feature>
<feature type="mutagenesis site" description="Loss of demethylase activity." evidence="6">
    <original>R</original>
    <variation>A</variation>
    <location>
        <position position="151"/>
    </location>
</feature>
<feature type="mutagenesis site" description="Loss of demethylase activity." evidence="6">
    <original>C</original>
    <variation>A</variation>
    <location>
        <position position="185"/>
    </location>
</feature>
<feature type="mutagenesis site" description="Strongly reduced demethylase activity. Loss of enzymatic activity; when associated with 285-A--A-287." evidence="7">
    <original>YQPNEC</original>
    <variation>GSGSGS</variation>
    <location>
        <begin position="273"/>
        <end position="278"/>
    </location>
</feature>
<feature type="mutagenesis site" description="Strongly reduced demethylase activity. Loss of enzymatic activity; when associated with 273-G--S-278." evidence="7">
    <original>RPD</original>
    <variation>APA</variation>
    <location>
        <begin position="285"/>
        <end position="287"/>
    </location>
</feature>
<feature type="mutagenesis site" description="No effect on DNA or nucleosome binding." evidence="9">
    <original>R</original>
    <variation>D</variation>
    <location>
        <position position="302"/>
    </location>
</feature>
<feature type="mutagenesis site" description="Loss of demethylase activity." evidence="6">
    <original>WY</original>
    <variation>AA</variation>
    <location>
        <begin position="318"/>
        <end position="319"/>
    </location>
</feature>
<feature type="mutagenesis site" description="Loss of demethylase activity. Defective in the binding of FAD." evidence="6">
    <original>LV</original>
    <variation>AA</variation>
    <location>
        <begin position="340"/>
        <end position="341"/>
    </location>
</feature>
<feature type="mutagenesis site" description="Loss of demethylase activity. Defective in the binding of FAD." evidence="6">
    <original>LI</original>
    <variation>AA</variation>
    <location>
        <begin position="361"/>
        <end position="362"/>
    </location>
</feature>
<feature type="mutagenesis site" description="Loss of demethylase activity. Defective in the binding of FAD." evidence="6">
    <original>IN</original>
    <variation>GG</variation>
    <location>
        <begin position="443"/>
        <end position="444"/>
    </location>
</feature>
<feature type="mutagenesis site" description="No effect on DNA or nucleosome binding." evidence="9">
    <original>KR</original>
    <variation>ED</variation>
    <location>
        <begin position="481"/>
        <end position="482"/>
    </location>
</feature>
<feature type="mutagenesis site" description="Loss of demethylase activity." evidence="6">
    <original>N</original>
    <variation>A</variation>
    <location>
        <position position="542"/>
    </location>
</feature>
<feature type="mutagenesis site" description="Reduced demethylase activity." evidence="6">
    <original>L</original>
    <variation>A</variation>
    <location>
        <position position="543"/>
    </location>
</feature>
<feature type="mutagenesis site" description="Reduced demethylase activity." evidence="6">
    <original>C</original>
    <variation>A</variation>
    <location>
        <position position="547"/>
    </location>
</feature>
<feature type="mutagenesis site" description="Loss of demethylase activity." evidence="6">
    <original>W</original>
    <variation>A</variation>
    <location>
        <position position="559"/>
    </location>
</feature>
<feature type="mutagenesis site" description="Loss of demethylase activity." evidence="7">
    <original>E</original>
    <variation>A</variation>
    <location>
        <position position="563"/>
    </location>
</feature>
<feature type="mutagenesis site" description="Normal demethylase activity." evidence="7">
    <original>K</original>
    <variation>A</variation>
    <location>
        <position position="661"/>
    </location>
</feature>
<feature type="mutagenesis site" description="Loss of demethylase activity." evidence="6">
    <original>Y</original>
    <variation>A</variation>
    <location>
        <position position="767"/>
    </location>
</feature>
<feature type="sequence conflict" description="In Ref. 1; BAC86124." evidence="12" ref="1">
    <original>I</original>
    <variation>T</variation>
    <location>
        <position position="651"/>
    </location>
</feature>
<feature type="sequence conflict" description="In Ref. 4; CAH10499." evidence="12" ref="4">
    <location>
        <begin position="794"/>
        <end position="795"/>
    </location>
</feature>
<feature type="strand" evidence="38">
    <location>
        <begin position="51"/>
        <end position="55"/>
    </location>
</feature>
<feature type="strand" evidence="33">
    <location>
        <begin position="70"/>
        <end position="72"/>
    </location>
</feature>
<feature type="strand" evidence="34">
    <location>
        <begin position="75"/>
        <end position="77"/>
    </location>
</feature>
<feature type="strand" evidence="38">
    <location>
        <begin position="82"/>
        <end position="86"/>
    </location>
</feature>
<feature type="strand" evidence="38">
    <location>
        <begin position="89"/>
        <end position="92"/>
    </location>
</feature>
<feature type="helix" evidence="38">
    <location>
        <begin position="93"/>
        <end position="100"/>
    </location>
</feature>
<feature type="helix" evidence="34">
    <location>
        <begin position="104"/>
        <end position="106"/>
    </location>
</feature>
<feature type="helix" evidence="38">
    <location>
        <begin position="107"/>
        <end position="116"/>
    </location>
</feature>
<feature type="turn" evidence="38">
    <location>
        <begin position="117"/>
        <end position="120"/>
    </location>
</feature>
<feature type="helix" evidence="38">
    <location>
        <begin position="127"/>
        <end position="134"/>
    </location>
</feature>
<feature type="strand" evidence="38">
    <location>
        <begin position="139"/>
        <end position="141"/>
    </location>
</feature>
<feature type="turn" evidence="38">
    <location>
        <begin position="145"/>
        <end position="147"/>
    </location>
</feature>
<feature type="strand" evidence="38">
    <location>
        <begin position="150"/>
        <end position="152"/>
    </location>
</feature>
<feature type="helix" evidence="38">
    <location>
        <begin position="161"/>
        <end position="166"/>
    </location>
</feature>
<feature type="strand" evidence="35">
    <location>
        <begin position="173"/>
        <end position="175"/>
    </location>
</feature>
<feature type="strand" evidence="32">
    <location>
        <begin position="180"/>
        <end position="182"/>
    </location>
</feature>
<feature type="helix" evidence="38">
    <location>
        <begin position="184"/>
        <end position="186"/>
    </location>
</feature>
<feature type="helix" evidence="38">
    <location>
        <begin position="192"/>
        <end position="195"/>
    </location>
</feature>
<feature type="helix" evidence="38">
    <location>
        <begin position="199"/>
        <end position="203"/>
    </location>
</feature>
<feature type="strand" evidence="38">
    <location>
        <begin position="211"/>
        <end position="213"/>
    </location>
</feature>
<feature type="helix" evidence="38">
    <location>
        <begin position="217"/>
        <end position="219"/>
    </location>
</feature>
<feature type="helix" evidence="38">
    <location>
        <begin position="225"/>
        <end position="227"/>
    </location>
</feature>
<feature type="turn" evidence="40">
    <location>
        <begin position="235"/>
        <end position="238"/>
    </location>
</feature>
<feature type="helix" evidence="36">
    <location>
        <begin position="267"/>
        <end position="269"/>
    </location>
</feature>
<feature type="strand" evidence="36">
    <location>
        <begin position="286"/>
        <end position="288"/>
    </location>
</feature>
<feature type="helix" evidence="38">
    <location>
        <begin position="291"/>
        <end position="296"/>
    </location>
</feature>
<feature type="helix" evidence="38">
    <location>
        <begin position="298"/>
        <end position="300"/>
    </location>
</feature>
<feature type="helix" evidence="38">
    <location>
        <begin position="305"/>
        <end position="320"/>
    </location>
</feature>
<feature type="helix" evidence="38">
    <location>
        <begin position="328"/>
        <end position="331"/>
    </location>
</feature>
<feature type="helix" evidence="38">
    <location>
        <begin position="332"/>
        <end position="334"/>
    </location>
</feature>
<feature type="helix" evidence="38">
    <location>
        <begin position="341"/>
        <end position="358"/>
    </location>
</feature>
<feature type="strand" evidence="38">
    <location>
        <begin position="361"/>
        <end position="363"/>
    </location>
</feature>
<feature type="helix" evidence="37">
    <location>
        <begin position="371"/>
        <end position="373"/>
    </location>
</feature>
<feature type="helix" evidence="38">
    <location>
        <begin position="378"/>
        <end position="380"/>
    </location>
</feature>
<feature type="strand" evidence="38">
    <location>
        <begin position="384"/>
        <end position="388"/>
    </location>
</feature>
<feature type="helix" evidence="38">
    <location>
        <begin position="392"/>
        <end position="404"/>
    </location>
</feature>
<feature type="strand" evidence="38">
    <location>
        <begin position="407"/>
        <end position="411"/>
    </location>
</feature>
<feature type="strand" evidence="38">
    <location>
        <begin position="413"/>
        <end position="417"/>
    </location>
</feature>
<feature type="strand" evidence="33">
    <location>
        <begin position="427"/>
        <end position="430"/>
    </location>
</feature>
<feature type="strand" evidence="38">
    <location>
        <begin position="432"/>
        <end position="435"/>
    </location>
</feature>
<feature type="strand" evidence="38">
    <location>
        <begin position="438"/>
        <end position="440"/>
    </location>
</feature>
<feature type="helix" evidence="38">
    <location>
        <begin position="446"/>
        <end position="454"/>
    </location>
</feature>
<feature type="strand" evidence="33">
    <location>
        <begin position="458"/>
        <end position="460"/>
    </location>
</feature>
<feature type="strand" evidence="39">
    <location>
        <begin position="467"/>
        <end position="469"/>
    </location>
</feature>
<feature type="helix" evidence="38">
    <location>
        <begin position="477"/>
        <end position="497"/>
    </location>
</feature>
<feature type="helix" evidence="38">
    <location>
        <begin position="498"/>
        <end position="500"/>
    </location>
</feature>
<feature type="helix" evidence="38">
    <location>
        <begin position="503"/>
        <end position="505"/>
    </location>
</feature>
<feature type="helix" evidence="38">
    <location>
        <begin position="509"/>
        <end position="523"/>
    </location>
</feature>
<feature type="helix" evidence="38">
    <location>
        <begin position="530"/>
        <end position="547"/>
    </location>
</feature>
<feature type="turn" evidence="38">
    <location>
        <begin position="551"/>
        <end position="553"/>
    </location>
</feature>
<feature type="turn" evidence="38">
    <location>
        <begin position="556"/>
        <end position="560"/>
    </location>
</feature>
<feature type="helix" evidence="38">
    <location>
        <begin position="561"/>
        <end position="564"/>
    </location>
</feature>
<feature type="strand" evidence="38">
    <location>
        <begin position="572"/>
        <end position="574"/>
    </location>
</feature>
<feature type="helix" evidence="38">
    <location>
        <begin position="580"/>
        <end position="587"/>
    </location>
</feature>
<feature type="strand" evidence="38">
    <location>
        <begin position="592"/>
        <end position="595"/>
    </location>
</feature>
<feature type="strand" evidence="38">
    <location>
        <begin position="598"/>
        <end position="602"/>
    </location>
</feature>
<feature type="strand" evidence="38">
    <location>
        <begin position="604"/>
        <end position="612"/>
    </location>
</feature>
<feature type="strand" evidence="38">
    <location>
        <begin position="617"/>
        <end position="625"/>
    </location>
</feature>
<feature type="helix" evidence="38">
    <location>
        <begin position="629"/>
        <end position="634"/>
    </location>
</feature>
<feature type="strand" evidence="38">
    <location>
        <begin position="637"/>
        <end position="641"/>
    </location>
</feature>
<feature type="helix" evidence="38">
    <location>
        <begin position="645"/>
        <end position="653"/>
    </location>
</feature>
<feature type="strand" evidence="38">
    <location>
        <begin position="654"/>
        <end position="657"/>
    </location>
</feature>
<feature type="strand" evidence="38">
    <location>
        <begin position="660"/>
        <end position="665"/>
    </location>
</feature>
<feature type="helix" evidence="38">
    <location>
        <begin position="672"/>
        <end position="675"/>
    </location>
</feature>
<feature type="strand" evidence="38">
    <location>
        <begin position="679"/>
        <end position="683"/>
    </location>
</feature>
<feature type="strand" evidence="38">
    <location>
        <begin position="686"/>
        <end position="688"/>
    </location>
</feature>
<feature type="turn" evidence="38">
    <location>
        <begin position="689"/>
        <end position="692"/>
    </location>
</feature>
<feature type="strand" evidence="38">
    <location>
        <begin position="693"/>
        <end position="700"/>
    </location>
</feature>
<feature type="strand" evidence="38">
    <location>
        <begin position="708"/>
        <end position="713"/>
    </location>
</feature>
<feature type="helix" evidence="38">
    <location>
        <begin position="716"/>
        <end position="720"/>
    </location>
</feature>
<feature type="turn" evidence="38">
    <location>
        <begin position="721"/>
        <end position="723"/>
    </location>
</feature>
<feature type="helix" evidence="38">
    <location>
        <begin position="726"/>
        <end position="740"/>
    </location>
</feature>
<feature type="turn" evidence="38">
    <location>
        <begin position="741"/>
        <end position="743"/>
    </location>
</feature>
<feature type="strand" evidence="38">
    <location>
        <begin position="750"/>
        <end position="754"/>
    </location>
</feature>
<feature type="helix" evidence="38">
    <location>
        <begin position="757"/>
        <end position="759"/>
    </location>
</feature>
<feature type="turn" evidence="38">
    <location>
        <begin position="761"/>
        <end position="763"/>
    </location>
</feature>
<feature type="strand" evidence="38">
    <location>
        <begin position="766"/>
        <end position="771"/>
    </location>
</feature>
<feature type="helix" evidence="38">
    <location>
        <begin position="777"/>
        <end position="783"/>
    </location>
</feature>
<feature type="turn" evidence="38">
    <location>
        <begin position="787"/>
        <end position="789"/>
    </location>
</feature>
<feature type="strand" evidence="38">
    <location>
        <begin position="790"/>
        <end position="792"/>
    </location>
</feature>
<feature type="helix" evidence="38">
    <location>
        <begin position="795"/>
        <end position="797"/>
    </location>
</feature>
<feature type="strand" evidence="38">
    <location>
        <begin position="799"/>
        <end position="801"/>
    </location>
</feature>
<feature type="helix" evidence="38">
    <location>
        <begin position="805"/>
        <end position="821"/>
    </location>
</feature>
<reference key="1">
    <citation type="journal article" date="2004" name="Nat. Genet.">
        <title>Complete sequencing and characterization of 21,243 full-length human cDNAs.</title>
        <authorList>
            <person name="Ota T."/>
            <person name="Suzuki Y."/>
            <person name="Nishikawa T."/>
            <person name="Otsuki T."/>
            <person name="Sugiyama T."/>
            <person name="Irie R."/>
            <person name="Wakamatsu A."/>
            <person name="Hayashi K."/>
            <person name="Sato H."/>
            <person name="Nagai K."/>
            <person name="Kimura K."/>
            <person name="Makita H."/>
            <person name="Sekine M."/>
            <person name="Obayashi M."/>
            <person name="Nishi T."/>
            <person name="Shibahara T."/>
            <person name="Tanaka T."/>
            <person name="Ishii S."/>
            <person name="Yamamoto J."/>
            <person name="Saito K."/>
            <person name="Kawai Y."/>
            <person name="Isono Y."/>
            <person name="Nakamura Y."/>
            <person name="Nagahari K."/>
            <person name="Murakami K."/>
            <person name="Yasuda T."/>
            <person name="Iwayanagi T."/>
            <person name="Wagatsuma M."/>
            <person name="Shiratori A."/>
            <person name="Sudo H."/>
            <person name="Hosoiri T."/>
            <person name="Kaku Y."/>
            <person name="Kodaira H."/>
            <person name="Kondo H."/>
            <person name="Sugawara M."/>
            <person name="Takahashi M."/>
            <person name="Kanda K."/>
            <person name="Yokoi T."/>
            <person name="Furuya T."/>
            <person name="Kikkawa E."/>
            <person name="Omura Y."/>
            <person name="Abe K."/>
            <person name="Kamihara K."/>
            <person name="Katsuta N."/>
            <person name="Sato K."/>
            <person name="Tanikawa M."/>
            <person name="Yamazaki M."/>
            <person name="Ninomiya K."/>
            <person name="Ishibashi T."/>
            <person name="Yamashita H."/>
            <person name="Murakawa K."/>
            <person name="Fujimori K."/>
            <person name="Tanai H."/>
            <person name="Kimata M."/>
            <person name="Watanabe M."/>
            <person name="Hiraoka S."/>
            <person name="Chiba Y."/>
            <person name="Ishida S."/>
            <person name="Ono Y."/>
            <person name="Takiguchi S."/>
            <person name="Watanabe S."/>
            <person name="Yosida M."/>
            <person name="Hotuta T."/>
            <person name="Kusano J."/>
            <person name="Kanehori K."/>
            <person name="Takahashi-Fujii A."/>
            <person name="Hara H."/>
            <person name="Tanase T.-O."/>
            <person name="Nomura Y."/>
            <person name="Togiya S."/>
            <person name="Komai F."/>
            <person name="Hara R."/>
            <person name="Takeuchi K."/>
            <person name="Arita M."/>
            <person name="Imose N."/>
            <person name="Musashino K."/>
            <person name="Yuuki H."/>
            <person name="Oshima A."/>
            <person name="Sasaki N."/>
            <person name="Aotsuka S."/>
            <person name="Yoshikawa Y."/>
            <person name="Matsunawa H."/>
            <person name="Ichihara T."/>
            <person name="Shiohata N."/>
            <person name="Sano S."/>
            <person name="Moriya S."/>
            <person name="Momiyama H."/>
            <person name="Satoh N."/>
            <person name="Takami S."/>
            <person name="Terashima Y."/>
            <person name="Suzuki O."/>
            <person name="Nakagawa S."/>
            <person name="Senoh A."/>
            <person name="Mizoguchi H."/>
            <person name="Goto Y."/>
            <person name="Shimizu F."/>
            <person name="Wakebe H."/>
            <person name="Hishigaki H."/>
            <person name="Watanabe T."/>
            <person name="Sugiyama A."/>
            <person name="Takemoto M."/>
            <person name="Kawakami B."/>
            <person name="Yamazaki M."/>
            <person name="Watanabe K."/>
            <person name="Kumagai A."/>
            <person name="Itakura S."/>
            <person name="Fukuzumi Y."/>
            <person name="Fujimori Y."/>
            <person name="Komiyama M."/>
            <person name="Tashiro H."/>
            <person name="Tanigami A."/>
            <person name="Fujiwara T."/>
            <person name="Ono T."/>
            <person name="Yamada K."/>
            <person name="Fujii Y."/>
            <person name="Ozaki K."/>
            <person name="Hirao M."/>
            <person name="Ohmori Y."/>
            <person name="Kawabata A."/>
            <person name="Hikiji T."/>
            <person name="Kobatake N."/>
            <person name="Inagaki H."/>
            <person name="Ikema Y."/>
            <person name="Okamoto S."/>
            <person name="Okitani R."/>
            <person name="Kawakami T."/>
            <person name="Noguchi S."/>
            <person name="Itoh T."/>
            <person name="Shigeta K."/>
            <person name="Senba T."/>
            <person name="Matsumura K."/>
            <person name="Nakajima Y."/>
            <person name="Mizuno T."/>
            <person name="Morinaga M."/>
            <person name="Sasaki M."/>
            <person name="Togashi T."/>
            <person name="Oyama M."/>
            <person name="Hata H."/>
            <person name="Watanabe M."/>
            <person name="Komatsu T."/>
            <person name="Mizushima-Sugano J."/>
            <person name="Satoh T."/>
            <person name="Shirai Y."/>
            <person name="Takahashi Y."/>
            <person name="Nakagawa K."/>
            <person name="Okumura K."/>
            <person name="Nagase T."/>
            <person name="Nomura N."/>
            <person name="Kikuchi H."/>
            <person name="Masuho Y."/>
            <person name="Yamashita R."/>
            <person name="Nakai K."/>
            <person name="Yada T."/>
            <person name="Nakamura Y."/>
            <person name="Ohara O."/>
            <person name="Isogai T."/>
            <person name="Sugano S."/>
        </authorList>
    </citation>
    <scope>NUCLEOTIDE SEQUENCE [LARGE SCALE MRNA] (ISOFORMS 2 AND 4)</scope>
    <scope>NUCLEOTIDE SEQUENCE [LARGE SCALE MRNA] OF 185-822 (ISOFORM 1)</scope>
    <source>
        <tissue>Brain</tissue>
        <tissue>Tongue</tissue>
    </source>
</reference>
<reference key="2">
    <citation type="journal article" date="2003" name="Nature">
        <title>The DNA sequence and analysis of human chromosome 6.</title>
        <authorList>
            <person name="Mungall A.J."/>
            <person name="Palmer S.A."/>
            <person name="Sims S.K."/>
            <person name="Edwards C.A."/>
            <person name="Ashurst J.L."/>
            <person name="Wilming L."/>
            <person name="Jones M.C."/>
            <person name="Horton R."/>
            <person name="Hunt S.E."/>
            <person name="Scott C.E."/>
            <person name="Gilbert J.G.R."/>
            <person name="Clamp M.E."/>
            <person name="Bethel G."/>
            <person name="Milne S."/>
            <person name="Ainscough R."/>
            <person name="Almeida J.P."/>
            <person name="Ambrose K.D."/>
            <person name="Andrews T.D."/>
            <person name="Ashwell R.I.S."/>
            <person name="Babbage A.K."/>
            <person name="Bagguley C.L."/>
            <person name="Bailey J."/>
            <person name="Banerjee R."/>
            <person name="Barker D.J."/>
            <person name="Barlow K.F."/>
            <person name="Bates K."/>
            <person name="Beare D.M."/>
            <person name="Beasley H."/>
            <person name="Beasley O."/>
            <person name="Bird C.P."/>
            <person name="Blakey S.E."/>
            <person name="Bray-Allen S."/>
            <person name="Brook J."/>
            <person name="Brown A.J."/>
            <person name="Brown J.Y."/>
            <person name="Burford D.C."/>
            <person name="Burrill W."/>
            <person name="Burton J."/>
            <person name="Carder C."/>
            <person name="Carter N.P."/>
            <person name="Chapman J.C."/>
            <person name="Clark S.Y."/>
            <person name="Clark G."/>
            <person name="Clee C.M."/>
            <person name="Clegg S."/>
            <person name="Cobley V."/>
            <person name="Collier R.E."/>
            <person name="Collins J.E."/>
            <person name="Colman L.K."/>
            <person name="Corby N.R."/>
            <person name="Coville G.J."/>
            <person name="Culley K.M."/>
            <person name="Dhami P."/>
            <person name="Davies J."/>
            <person name="Dunn M."/>
            <person name="Earthrowl M.E."/>
            <person name="Ellington A.E."/>
            <person name="Evans K.A."/>
            <person name="Faulkner L."/>
            <person name="Francis M.D."/>
            <person name="Frankish A."/>
            <person name="Frankland J."/>
            <person name="French L."/>
            <person name="Garner P."/>
            <person name="Garnett J."/>
            <person name="Ghori M.J."/>
            <person name="Gilby L.M."/>
            <person name="Gillson C.J."/>
            <person name="Glithero R.J."/>
            <person name="Grafham D.V."/>
            <person name="Grant M."/>
            <person name="Gribble S."/>
            <person name="Griffiths C."/>
            <person name="Griffiths M.N.D."/>
            <person name="Hall R."/>
            <person name="Halls K.S."/>
            <person name="Hammond S."/>
            <person name="Harley J.L."/>
            <person name="Hart E.A."/>
            <person name="Heath P.D."/>
            <person name="Heathcott R."/>
            <person name="Holmes S.J."/>
            <person name="Howden P.J."/>
            <person name="Howe K.L."/>
            <person name="Howell G.R."/>
            <person name="Huckle E."/>
            <person name="Humphray S.J."/>
            <person name="Humphries M.D."/>
            <person name="Hunt A.R."/>
            <person name="Johnson C.M."/>
            <person name="Joy A.A."/>
            <person name="Kay M."/>
            <person name="Keenan S.J."/>
            <person name="Kimberley A.M."/>
            <person name="King A."/>
            <person name="Laird G.K."/>
            <person name="Langford C."/>
            <person name="Lawlor S."/>
            <person name="Leongamornlert D.A."/>
            <person name="Leversha M."/>
            <person name="Lloyd C.R."/>
            <person name="Lloyd D.M."/>
            <person name="Loveland J.E."/>
            <person name="Lovell J."/>
            <person name="Martin S."/>
            <person name="Mashreghi-Mohammadi M."/>
            <person name="Maslen G.L."/>
            <person name="Matthews L."/>
            <person name="McCann O.T."/>
            <person name="McLaren S.J."/>
            <person name="McLay K."/>
            <person name="McMurray A."/>
            <person name="Moore M.J.F."/>
            <person name="Mullikin J.C."/>
            <person name="Niblett D."/>
            <person name="Nickerson T."/>
            <person name="Novik K.L."/>
            <person name="Oliver K."/>
            <person name="Overton-Larty E.K."/>
            <person name="Parker A."/>
            <person name="Patel R."/>
            <person name="Pearce A.V."/>
            <person name="Peck A.I."/>
            <person name="Phillimore B.J.C.T."/>
            <person name="Phillips S."/>
            <person name="Plumb R.W."/>
            <person name="Porter K.M."/>
            <person name="Ramsey Y."/>
            <person name="Ranby S.A."/>
            <person name="Rice C.M."/>
            <person name="Ross M.T."/>
            <person name="Searle S.M."/>
            <person name="Sehra H.K."/>
            <person name="Sheridan E."/>
            <person name="Skuce C.D."/>
            <person name="Smith S."/>
            <person name="Smith M."/>
            <person name="Spraggon L."/>
            <person name="Squares S.L."/>
            <person name="Steward C.A."/>
            <person name="Sycamore N."/>
            <person name="Tamlyn-Hall G."/>
            <person name="Tester J."/>
            <person name="Theaker A.J."/>
            <person name="Thomas D.W."/>
            <person name="Thorpe A."/>
            <person name="Tracey A."/>
            <person name="Tromans A."/>
            <person name="Tubby B."/>
            <person name="Wall M."/>
            <person name="Wallis J.M."/>
            <person name="West A.P."/>
            <person name="White S.S."/>
            <person name="Whitehead S.L."/>
            <person name="Whittaker H."/>
            <person name="Wild A."/>
            <person name="Willey D.J."/>
            <person name="Wilmer T.E."/>
            <person name="Wood J.M."/>
            <person name="Wray P.W."/>
            <person name="Wyatt J.C."/>
            <person name="Young L."/>
            <person name="Younger R.M."/>
            <person name="Bentley D.R."/>
            <person name="Coulson A."/>
            <person name="Durbin R.M."/>
            <person name="Hubbard T."/>
            <person name="Sulston J.E."/>
            <person name="Dunham I."/>
            <person name="Rogers J."/>
            <person name="Beck S."/>
        </authorList>
    </citation>
    <scope>NUCLEOTIDE SEQUENCE [LARGE SCALE GENOMIC DNA]</scope>
</reference>
<reference key="3">
    <citation type="submission" date="2005-07" db="EMBL/GenBank/DDBJ databases">
        <authorList>
            <person name="Mural R.J."/>
            <person name="Istrail S."/>
            <person name="Sutton G."/>
            <person name="Florea L."/>
            <person name="Halpern A.L."/>
            <person name="Mobarry C.M."/>
            <person name="Lippert R."/>
            <person name="Walenz B."/>
            <person name="Shatkay H."/>
            <person name="Dew I."/>
            <person name="Miller J.R."/>
            <person name="Flanigan M.J."/>
            <person name="Edwards N.J."/>
            <person name="Bolanos R."/>
            <person name="Fasulo D."/>
            <person name="Halldorsson B.V."/>
            <person name="Hannenhalli S."/>
            <person name="Turner R."/>
            <person name="Yooseph S."/>
            <person name="Lu F."/>
            <person name="Nusskern D.R."/>
            <person name="Shue B.C."/>
            <person name="Zheng X.H."/>
            <person name="Zhong F."/>
            <person name="Delcher A.L."/>
            <person name="Huson D.H."/>
            <person name="Kravitz S.A."/>
            <person name="Mouchard L."/>
            <person name="Reinert K."/>
            <person name="Remington K.A."/>
            <person name="Clark A.G."/>
            <person name="Waterman M.S."/>
            <person name="Eichler E.E."/>
            <person name="Adams M.D."/>
            <person name="Hunkapiller M.W."/>
            <person name="Myers E.W."/>
            <person name="Venter J.C."/>
        </authorList>
    </citation>
    <scope>NUCLEOTIDE SEQUENCE [LARGE SCALE GENOMIC DNA]</scope>
</reference>
<reference key="4">
    <citation type="journal article" date="2007" name="BMC Genomics">
        <title>The full-ORF clone resource of the German cDNA consortium.</title>
        <authorList>
            <person name="Bechtel S."/>
            <person name="Rosenfelder H."/>
            <person name="Duda A."/>
            <person name="Schmidt C.P."/>
            <person name="Ernst U."/>
            <person name="Wellenreuther R."/>
            <person name="Mehrle A."/>
            <person name="Schuster C."/>
            <person name="Bahr A."/>
            <person name="Bloecker H."/>
            <person name="Heubner D."/>
            <person name="Hoerlein A."/>
            <person name="Michel G."/>
            <person name="Wedler H."/>
            <person name="Koehrer K."/>
            <person name="Ottenwaelder B."/>
            <person name="Poustka A."/>
            <person name="Wiemann S."/>
            <person name="Schupp I."/>
        </authorList>
    </citation>
    <scope>NUCLEOTIDE SEQUENCE [LARGE SCALE MRNA] OF 624-822 (ISOFORM 1)</scope>
    <source>
        <tissue>Cervix</tissue>
    </source>
</reference>
<reference key="5">
    <citation type="journal article" date="2008" name="J. Proteome Res.">
        <title>Combining protein-based IMAC, peptide-based IMAC, and MudPIT for efficient phosphoproteomic analysis.</title>
        <authorList>
            <person name="Cantin G.T."/>
            <person name="Yi W."/>
            <person name="Lu B."/>
            <person name="Park S.K."/>
            <person name="Xu T."/>
            <person name="Lee J.-D."/>
            <person name="Yates J.R. III"/>
        </authorList>
    </citation>
    <scope>PHOSPHORYLATION [LARGE SCALE ANALYSIS] AT SER-17</scope>
    <scope>IDENTIFICATION BY MASS SPECTROMETRY [LARGE SCALE ANALYSIS]</scope>
    <source>
        <tissue>Cervix carcinoma</tissue>
    </source>
</reference>
<reference key="6">
    <citation type="journal article" date="2008" name="Proc. Natl. Acad. Sci. U.S.A.">
        <title>A quantitative atlas of mitotic phosphorylation.</title>
        <authorList>
            <person name="Dephoure N."/>
            <person name="Zhou C."/>
            <person name="Villen J."/>
            <person name="Beausoleil S.A."/>
            <person name="Bakalarski C.E."/>
            <person name="Elledge S.J."/>
            <person name="Gygi S.P."/>
        </authorList>
    </citation>
    <scope>PHOSPHORYLATION [LARGE SCALE ANALYSIS] AT SER-17</scope>
    <scope>IDENTIFICATION BY MASS SPECTROMETRY [LARGE SCALE ANALYSIS]</scope>
    <source>
        <tissue>Cervix carcinoma</tissue>
    </source>
</reference>
<reference key="7">
    <citation type="journal article" date="2010" name="Sci. Signal.">
        <title>Quantitative phosphoproteomics reveals widespread full phosphorylation site occupancy during mitosis.</title>
        <authorList>
            <person name="Olsen J.V."/>
            <person name="Vermeulen M."/>
            <person name="Santamaria A."/>
            <person name="Kumar C."/>
            <person name="Miller M.L."/>
            <person name="Jensen L.J."/>
            <person name="Gnad F."/>
            <person name="Cox J."/>
            <person name="Jensen T.S."/>
            <person name="Nigg E.A."/>
            <person name="Brunak S."/>
            <person name="Mann M."/>
        </authorList>
    </citation>
    <scope>PHOSPHORYLATION [LARGE SCALE ANALYSIS] AT SER-17 AND SER-247</scope>
    <scope>IDENTIFICATION BY MASS SPECTROMETRY [LARGE SCALE ANALYSIS]</scope>
    <source>
        <tissue>Cervix carcinoma</tissue>
    </source>
</reference>
<reference key="8">
    <citation type="journal article" date="2013" name="J. Proteome Res.">
        <title>Toward a comprehensive characterization of a human cancer cell phosphoproteome.</title>
        <authorList>
            <person name="Zhou H."/>
            <person name="Di Palma S."/>
            <person name="Preisinger C."/>
            <person name="Peng M."/>
            <person name="Polat A.N."/>
            <person name="Heck A.J."/>
            <person name="Mohammed S."/>
        </authorList>
    </citation>
    <scope>PHOSPHORYLATION [LARGE SCALE ANALYSIS] AT SER-13; SER-17; SER-26 AND SER-247</scope>
    <scope>IDENTIFICATION BY MASS SPECTROMETRY [LARGE SCALE ANALYSIS]</scope>
    <source>
        <tissue>Cervix carcinoma</tissue>
        <tissue>Erythroleukemia</tissue>
    </source>
</reference>
<reference key="9">
    <citation type="journal article" date="2014" name="J. Proteomics">
        <title>An enzyme assisted RP-RPLC approach for in-depth analysis of human liver phosphoproteome.</title>
        <authorList>
            <person name="Bian Y."/>
            <person name="Song C."/>
            <person name="Cheng K."/>
            <person name="Dong M."/>
            <person name="Wang F."/>
            <person name="Huang J."/>
            <person name="Sun D."/>
            <person name="Wang L."/>
            <person name="Ye M."/>
            <person name="Zou H."/>
        </authorList>
    </citation>
    <scope>PHOSPHORYLATION [LARGE SCALE ANALYSIS] AT SER-247</scope>
    <scope>IDENTIFICATION BY MASS SPECTROMETRY [LARGE SCALE ANALYSIS]</scope>
    <source>
        <tissue>Liver</tissue>
    </source>
</reference>
<reference key="10">
    <citation type="journal article" date="2019" name="Nat. Commun.">
        <title>BAP1 complex promotes transcription by opposing PRC1-mediated H2A ubiquitylation.</title>
        <authorList>
            <person name="Campagne A."/>
            <person name="Lee M.K."/>
            <person name="Zielinski D."/>
            <person name="Michaud A."/>
            <person name="Le Corre S."/>
            <person name="Dingli F."/>
            <person name="Chen H."/>
            <person name="Shahidian L.Z."/>
            <person name="Vassilev I."/>
            <person name="Servant N."/>
            <person name="Loew D."/>
            <person name="Pasmant E."/>
            <person name="Postel-Vinay S."/>
            <person name="Wassef M."/>
            <person name="Margueron R."/>
        </authorList>
    </citation>
    <scope>IDENTIFICATION IN THE PR-DUB COMPLEX</scope>
    <scope>SUBCELLULAR LOCATION</scope>
    <scope>IDENTIFICATION BY MASS SPECTROMETRY</scope>
</reference>
<reference key="11">
    <citation type="journal article" date="2013" name="Cell Res.">
        <title>Structure-function analysis reveals a novel mechanism for regulation of histone demethylase LSD2/AOF1/KDM1b.</title>
        <authorList>
            <person name="Zhang Q."/>
            <person name="Qi S."/>
            <person name="Xu M."/>
            <person name="Yu L."/>
            <person name="Tao Y."/>
            <person name="Deng Z."/>
            <person name="Wu W."/>
            <person name="Li J."/>
            <person name="Chen Z."/>
            <person name="Wong J."/>
        </authorList>
    </citation>
    <scope>X-RAY CRYSTALLOGRAPHY (2.13 ANGSTROMS) OF 30-822 IN COMPLEX WITH HISTONE H3 ANALOG PEPTIDE; FAD AND ZINC</scope>
    <scope>MUTAGENESIS OF 48-LYS-LYS-49; 51-ARG-LYS-52; CYS-53; TRP-82; HIS-84; HIS-90; ARG-101; 114-LYS-LYS-115; TRP-139; TRP-150; ARG-151; CYS-185; 318-TRP-TYR-319; 340-LEU-VAL-341; 361-LEU-ILE-362; 443-ILE-ASN-444; ASN-542; LEU-543; CYS-547; TRP-559 AND TYR-767</scope>
</reference>
<reference key="12">
    <citation type="journal article" date="2013" name="Cell Res.">
        <title>Structural insight into substrate recognition by histone demethylase LSD2/KDM1b.</title>
        <authorList>
            <person name="Chen F."/>
            <person name="Yang H."/>
            <person name="Dong Z."/>
            <person name="Fang J."/>
            <person name="Wang P."/>
            <person name="Zhu T."/>
            <person name="Gong W."/>
            <person name="Fang R."/>
            <person name="Shi Y.G."/>
            <person name="Li Z."/>
            <person name="Xu Y."/>
        </authorList>
    </citation>
    <scope>X-RAY CRYSTALLOGRAPHY (1.99 ANGSTROMS) OF 51-822 IN COMPLEX WITH FAD AND ZINC</scope>
    <scope>FUNCTION</scope>
    <scope>CATALYTIC ACTIVITY</scope>
    <scope>MUTAGENESIS OF 273-TYR--CYS-278; 285-ARG--ASP-287; GLU-563 AND LYS-661</scope>
</reference>
<reference key="13">
    <citation type="journal article" date="2013" name="Mol. Cell">
        <title>LSD2/KDM1B and its cofactor NPAC/GLYR1 endow a structural and molecular model for regulation of H3K4 demethylation.</title>
        <authorList>
            <person name="Fang R."/>
            <person name="Chen F."/>
            <person name="Dong Z."/>
            <person name="Hu D."/>
            <person name="Barbera A.J."/>
            <person name="Clark E.A."/>
            <person name="Fang J."/>
            <person name="Yang Y."/>
            <person name="Mei P."/>
            <person name="Rutenberg M."/>
            <person name="Li Z."/>
            <person name="Zhang Y."/>
            <person name="Xu Y."/>
            <person name="Yang H."/>
            <person name="Wang P."/>
            <person name="Simon M.D."/>
            <person name="Zhou Q."/>
            <person name="Li J."/>
            <person name="Marynick M.P."/>
            <person name="Li X."/>
            <person name="Lu H."/>
            <person name="Kaiser U.B."/>
            <person name="Kingston R.E."/>
            <person name="Xu Y."/>
            <person name="Shi Y.G."/>
        </authorList>
    </citation>
    <scope>X-RAY CRYSTALLOGRAPHY (2.00 ANGSTROMS) OF 51-822 IN COMPLEX WITH GLYR1; HISTONE H3 PEPTIDE; FAD; ZINC AND FAD ANALOG</scope>
    <scope>FUNCTION</scope>
    <scope>CATALYTIC ACTIVITY</scope>
    <scope>INTERACTION WITH GLYR1</scope>
    <scope>ACTIVITY REGULATION</scope>
</reference>
<reference evidence="25 26" key="14">
    <citation type="journal article" date="2019" name="Cell Rep.">
        <title>A Tail-Based Mechanism Drives Nucleosome Demethylation by the LSD2/NPAC Multimeric Complex.</title>
        <authorList>
            <person name="Marabelli C."/>
            <person name="Marrocco B."/>
            <person name="Pilotto S."/>
            <person name="Chittori S."/>
            <person name="Picaud S."/>
            <person name="Marchese S."/>
            <person name="Ciossani G."/>
            <person name="Forneris F."/>
            <person name="Filippakopoulos P."/>
            <person name="Schoehn G."/>
            <person name="Rhodes D."/>
            <person name="Subramaniam S."/>
            <person name="Mattevi A."/>
        </authorList>
    </citation>
    <scope>STRUCTURE BY ELECTRON MICROSCOPY (4.36 ANGSTROMS) OF 51-822 IN COMPLEX WIH NUCLEOSOMES AND GLYR1</scope>
    <scope>CATALYTIC ACTIVITY</scope>
    <scope>FUNCTION</scope>
    <scope>BIOPHYSICOCHEMICAL PROPERTIES</scope>
    <scope>ACTIVITY REGULATION</scope>
    <scope>INTERACTION WITH GLYR1</scope>
    <scope>COFACTOR</scope>
    <scope>MUTAGENESIS OF HIS-103; LYS-104; LYS-109; LYS-114; LYS-115; LYS-122; ARG-302 AND 481-LYS-ARG-482</scope>
</reference>